<keyword id="KW-0007">Acetylation</keyword>
<keyword id="KW-0963">Cytoplasm</keyword>
<keyword id="KW-0223">Dioxygenase</keyword>
<keyword id="KW-0256">Endoplasmic reticulum</keyword>
<keyword id="KW-0333">Golgi apparatus</keyword>
<keyword id="KW-0408">Iron</keyword>
<keyword id="KW-0472">Membrane</keyword>
<keyword id="KW-0479">Metal-binding</keyword>
<keyword id="KW-0560">Oxidoreductase</keyword>
<keyword id="KW-0585">Phenylalanine catabolism</keyword>
<keyword id="KW-0597">Phosphoprotein</keyword>
<keyword id="KW-1185">Reference proteome</keyword>
<keyword id="KW-0677">Repeat</keyword>
<keyword id="KW-0828">Tyrosine catabolism</keyword>
<protein>
    <recommendedName>
        <fullName>4-hydroxyphenylpyruvate dioxygenase</fullName>
        <ecNumber evidence="2">1.13.11.27</ecNumber>
    </recommendedName>
    <alternativeName>
        <fullName>4-hydroxyphenylpyruvic acid oxidase</fullName>
        <shortName>4HPPD</shortName>
        <shortName>HPD</shortName>
        <shortName>HPPDase</shortName>
    </alternativeName>
</protein>
<evidence type="ECO:0000250" key="1">
    <source>
        <dbReference type="UniProtKB" id="P32754"/>
    </source>
</evidence>
<evidence type="ECO:0000250" key="2">
    <source>
        <dbReference type="UniProtKB" id="P32755"/>
    </source>
</evidence>
<evidence type="ECO:0000250" key="3">
    <source>
        <dbReference type="UniProtKB" id="P49429"/>
    </source>
</evidence>
<evidence type="ECO:0000255" key="4">
    <source>
        <dbReference type="PROSITE-ProRule" id="PRU01163"/>
    </source>
</evidence>
<evidence type="ECO:0000305" key="5"/>
<organism>
    <name type="scientific">Bos taurus</name>
    <name type="common">Bovine</name>
    <dbReference type="NCBI Taxonomy" id="9913"/>
    <lineage>
        <taxon>Eukaryota</taxon>
        <taxon>Metazoa</taxon>
        <taxon>Chordata</taxon>
        <taxon>Craniata</taxon>
        <taxon>Vertebrata</taxon>
        <taxon>Euteleostomi</taxon>
        <taxon>Mammalia</taxon>
        <taxon>Eutheria</taxon>
        <taxon>Laurasiatheria</taxon>
        <taxon>Artiodactyla</taxon>
        <taxon>Ruminantia</taxon>
        <taxon>Pecora</taxon>
        <taxon>Bovidae</taxon>
        <taxon>Bovinae</taxon>
        <taxon>Bos</taxon>
    </lineage>
</organism>
<dbReference type="EC" id="1.13.11.27" evidence="2"/>
<dbReference type="EMBL" id="BT020749">
    <property type="protein sequence ID" value="AAX08766.1"/>
    <property type="molecule type" value="mRNA"/>
</dbReference>
<dbReference type="EMBL" id="BC105225">
    <property type="protein sequence ID" value="AAI05226.1"/>
    <property type="molecule type" value="mRNA"/>
</dbReference>
<dbReference type="RefSeq" id="NP_001015611.1">
    <property type="nucleotide sequence ID" value="NM_001015611.1"/>
</dbReference>
<dbReference type="SMR" id="Q5EA20"/>
<dbReference type="FunCoup" id="Q5EA20">
    <property type="interactions" value="215"/>
</dbReference>
<dbReference type="STRING" id="9913.ENSBTAP00000063559"/>
<dbReference type="PaxDb" id="9913-ENSBTAP00000005469"/>
<dbReference type="PeptideAtlas" id="Q5EA20"/>
<dbReference type="Ensembl" id="ENSBTAT00000005469.5">
    <property type="protein sequence ID" value="ENSBTAP00000005469.3"/>
    <property type="gene ID" value="ENSBTAG00000004175.5"/>
</dbReference>
<dbReference type="GeneID" id="516058"/>
<dbReference type="KEGG" id="bta:516058"/>
<dbReference type="CTD" id="3242"/>
<dbReference type="VEuPathDB" id="HostDB:ENSBTAG00000004175"/>
<dbReference type="VGNC" id="VGNC:29939">
    <property type="gene designation" value="HPD"/>
</dbReference>
<dbReference type="eggNOG" id="KOG0638">
    <property type="taxonomic scope" value="Eukaryota"/>
</dbReference>
<dbReference type="GeneTree" id="ENSGT00530000063474"/>
<dbReference type="HOGENOM" id="CLU_034004_3_1_1"/>
<dbReference type="InParanoid" id="Q5EA20"/>
<dbReference type="OMA" id="DPFPVKG"/>
<dbReference type="OrthoDB" id="414569at2759"/>
<dbReference type="TreeFam" id="TF300622"/>
<dbReference type="Reactome" id="R-BTA-8963684">
    <property type="pathway name" value="Tyrosine catabolism"/>
</dbReference>
<dbReference type="UniPathway" id="UPA00139">
    <property type="reaction ID" value="UER00362"/>
</dbReference>
<dbReference type="Proteomes" id="UP000009136">
    <property type="component" value="Chromosome 17"/>
</dbReference>
<dbReference type="Bgee" id="ENSBTAG00000004175">
    <property type="expression patterns" value="Expressed in liver and 65 other cell types or tissues"/>
</dbReference>
<dbReference type="GO" id="GO:0005789">
    <property type="term" value="C:endoplasmic reticulum membrane"/>
    <property type="evidence" value="ECO:0000318"/>
    <property type="project" value="GO_Central"/>
</dbReference>
<dbReference type="GO" id="GO:0000139">
    <property type="term" value="C:Golgi membrane"/>
    <property type="evidence" value="ECO:0000318"/>
    <property type="project" value="GO_Central"/>
</dbReference>
<dbReference type="GO" id="GO:0003868">
    <property type="term" value="F:4-hydroxyphenylpyruvate dioxygenase activity"/>
    <property type="evidence" value="ECO:0000250"/>
    <property type="project" value="UniProtKB"/>
</dbReference>
<dbReference type="GO" id="GO:0046872">
    <property type="term" value="F:metal ion binding"/>
    <property type="evidence" value="ECO:0007669"/>
    <property type="project" value="UniProtKB-KW"/>
</dbReference>
<dbReference type="GO" id="GO:0042803">
    <property type="term" value="F:protein homodimerization activity"/>
    <property type="evidence" value="ECO:0000250"/>
    <property type="project" value="UniProtKB"/>
</dbReference>
<dbReference type="GO" id="GO:0006559">
    <property type="term" value="P:L-phenylalanine catabolic process"/>
    <property type="evidence" value="ECO:0007669"/>
    <property type="project" value="UniProtKB-UniPathway"/>
</dbReference>
<dbReference type="GO" id="GO:0006572">
    <property type="term" value="P:tyrosine catabolic process"/>
    <property type="evidence" value="ECO:0000250"/>
    <property type="project" value="UniProtKB"/>
</dbReference>
<dbReference type="CDD" id="cd07250">
    <property type="entry name" value="HPPD_C_like"/>
    <property type="match status" value="1"/>
</dbReference>
<dbReference type="CDD" id="cd08342">
    <property type="entry name" value="HPPD_N_like"/>
    <property type="match status" value="1"/>
</dbReference>
<dbReference type="FunFam" id="3.10.180.10:FF:000008">
    <property type="entry name" value="4-hydroxyphenylpyruvate dioxygenase"/>
    <property type="match status" value="1"/>
</dbReference>
<dbReference type="FunFam" id="3.10.180.10:FF:000022">
    <property type="entry name" value="4-hydroxyphenylpyruvate dioxygenase"/>
    <property type="match status" value="1"/>
</dbReference>
<dbReference type="Gene3D" id="3.10.180.10">
    <property type="entry name" value="2,3-Dihydroxybiphenyl 1,2-Dioxygenase, domain 1"/>
    <property type="match status" value="2"/>
</dbReference>
<dbReference type="InterPro" id="IPR005956">
    <property type="entry name" value="4OHPhenylPyrv_dOase"/>
</dbReference>
<dbReference type="InterPro" id="IPR041735">
    <property type="entry name" value="4OHPhenylPyrv_dOase_C"/>
</dbReference>
<dbReference type="InterPro" id="IPR041736">
    <property type="entry name" value="4OHPhenylPyrv_dOase_N"/>
</dbReference>
<dbReference type="InterPro" id="IPR029068">
    <property type="entry name" value="Glyas_Bleomycin-R_OHBP_Dase"/>
</dbReference>
<dbReference type="InterPro" id="IPR004360">
    <property type="entry name" value="Glyas_Fos-R_dOase_dom"/>
</dbReference>
<dbReference type="InterPro" id="IPR037523">
    <property type="entry name" value="VOC"/>
</dbReference>
<dbReference type="NCBIfam" id="TIGR01263">
    <property type="entry name" value="4HPPD"/>
    <property type="match status" value="1"/>
</dbReference>
<dbReference type="PANTHER" id="PTHR11959">
    <property type="entry name" value="4-HYDROXYPHENYLPYRUVATE DIOXYGENASE"/>
    <property type="match status" value="1"/>
</dbReference>
<dbReference type="PANTHER" id="PTHR11959:SF12">
    <property type="entry name" value="4-HYDROXYPHENYLPYRUVATE DIOXYGENASE"/>
    <property type="match status" value="1"/>
</dbReference>
<dbReference type="Pfam" id="PF00903">
    <property type="entry name" value="Glyoxalase"/>
    <property type="match status" value="2"/>
</dbReference>
<dbReference type="PIRSF" id="PIRSF009283">
    <property type="entry name" value="HPP_dOase"/>
    <property type="match status" value="1"/>
</dbReference>
<dbReference type="SUPFAM" id="SSF54593">
    <property type="entry name" value="Glyoxalase/Bleomycin resistance protein/Dihydroxybiphenyl dioxygenase"/>
    <property type="match status" value="1"/>
</dbReference>
<dbReference type="PROSITE" id="PS51819">
    <property type="entry name" value="VOC"/>
    <property type="match status" value="2"/>
</dbReference>
<gene>
    <name type="primary">HPD</name>
</gene>
<feature type="initiator methionine" description="Removed" evidence="1">
    <location>
        <position position="1"/>
    </location>
</feature>
<feature type="chain" id="PRO_0000088387" description="4-hydroxyphenylpyruvate dioxygenase">
    <location>
        <begin position="2"/>
        <end position="393"/>
    </location>
</feature>
<feature type="domain" description="VOC 1" evidence="4">
    <location>
        <begin position="18"/>
        <end position="149"/>
    </location>
</feature>
<feature type="domain" description="VOC 2" evidence="4">
    <location>
        <begin position="180"/>
        <end position="338"/>
    </location>
</feature>
<feature type="binding site" evidence="2">
    <location>
        <position position="183"/>
    </location>
    <ligand>
        <name>Fe cation</name>
        <dbReference type="ChEBI" id="CHEBI:24875"/>
    </ligand>
</feature>
<feature type="binding site" evidence="2">
    <location>
        <position position="266"/>
    </location>
    <ligand>
        <name>Fe cation</name>
        <dbReference type="ChEBI" id="CHEBI:24875"/>
    </ligand>
</feature>
<feature type="binding site" evidence="2">
    <location>
        <position position="349"/>
    </location>
    <ligand>
        <name>Fe cation</name>
        <dbReference type="ChEBI" id="CHEBI:24875"/>
    </ligand>
</feature>
<feature type="modified residue" description="N-acetylthreonine" evidence="1">
    <location>
        <position position="2"/>
    </location>
</feature>
<feature type="modified residue" description="N6-succinyllysine" evidence="3">
    <location>
        <position position="132"/>
    </location>
</feature>
<feature type="modified residue" description="Phosphoserine" evidence="1">
    <location>
        <position position="211"/>
    </location>
</feature>
<feature type="modified residue" description="Phosphoserine" evidence="3">
    <location>
        <position position="226"/>
    </location>
</feature>
<feature type="modified residue" description="Phosphoserine" evidence="3">
    <location>
        <position position="250"/>
    </location>
</feature>
<accession>Q5EA20</accession>
<reference key="1">
    <citation type="journal article" date="2005" name="BMC Genomics">
        <title>Characterization of 954 bovine full-CDS cDNA sequences.</title>
        <authorList>
            <person name="Harhay G.P."/>
            <person name="Sonstegard T.S."/>
            <person name="Keele J.W."/>
            <person name="Heaton M.P."/>
            <person name="Clawson M.L."/>
            <person name="Snelling W.M."/>
            <person name="Wiedmann R.T."/>
            <person name="Van Tassell C.P."/>
            <person name="Smith T.P.L."/>
        </authorList>
    </citation>
    <scope>NUCLEOTIDE SEQUENCE [LARGE SCALE MRNA]</scope>
</reference>
<reference key="2">
    <citation type="submission" date="2005-09" db="EMBL/GenBank/DDBJ databases">
        <authorList>
            <consortium name="NIH - Mammalian Gene Collection (MGC) project"/>
        </authorList>
    </citation>
    <scope>NUCLEOTIDE SEQUENCE [LARGE SCALE MRNA]</scope>
    <source>
        <strain>Hereford</strain>
        <tissue>Rumen reticulum</tissue>
    </source>
</reference>
<name>HPPD_BOVIN</name>
<comment type="function">
    <text evidence="2">Catalyzes the conversion of 4-hydroxyphenylpyruvic acid to homogentisic acid, one of the steps in tyrosine catabolism.</text>
</comment>
<comment type="catalytic activity">
    <reaction evidence="2">
        <text>3-(4-hydroxyphenyl)pyruvate + O2 = homogentisate + CO2</text>
        <dbReference type="Rhea" id="RHEA:16189"/>
        <dbReference type="ChEBI" id="CHEBI:15379"/>
        <dbReference type="ChEBI" id="CHEBI:16169"/>
        <dbReference type="ChEBI" id="CHEBI:16526"/>
        <dbReference type="ChEBI" id="CHEBI:36242"/>
        <dbReference type="EC" id="1.13.11.27"/>
    </reaction>
    <physiologicalReaction direction="left-to-right" evidence="2">
        <dbReference type="Rhea" id="RHEA:16190"/>
    </physiologicalReaction>
</comment>
<comment type="cofactor">
    <cofactor evidence="2">
        <name>Fe cation</name>
        <dbReference type="ChEBI" id="CHEBI:24875"/>
    </cofactor>
    <text evidence="2">Binds 1 Fe cation per subunit.</text>
</comment>
<comment type="pathway">
    <text>Amino-acid degradation; L-phenylalanine degradation; acetoacetate and fumarate from L-phenylalanine: step 3/6.</text>
</comment>
<comment type="subunit">
    <text evidence="2">Homodimer.</text>
</comment>
<comment type="subcellular location">
    <subcellularLocation>
        <location evidence="2">Cytoplasm</location>
    </subcellularLocation>
    <subcellularLocation>
        <location evidence="2">Endoplasmic reticulum membrane</location>
        <topology evidence="2">Peripheral membrane protein</topology>
    </subcellularLocation>
    <subcellularLocation>
        <location evidence="2">Golgi apparatus membrane</location>
        <topology evidence="2">Peripheral membrane protein</topology>
    </subcellularLocation>
</comment>
<comment type="similarity">
    <text evidence="5">Belongs to the 4HPPD family.</text>
</comment>
<proteinExistence type="evidence at transcript level"/>
<sequence length="393" mass="44963">MTTYSDKGEKPERGRFLHFHSVTFWVGNAKQAASYYCSKLGFEPLAYKGLETGSREVVSHVVKQGQIVFVFSSALNPWNKEMGDHLVKHGDGVKDIAFEVEDCDYIVQKARERGAKIVREPWVEQDKLGKVKFAVLQTYGDTTHTLVEKMNYTGRFLPGFEAPPFMDPQLSKLPSCSLEIIDHIVGNQPDQEMVSASEWYLKNLQFHRFWSVDDTQVHTEYSSLRSVVVANYEESIKMPINEPAPGKKKSQIQEYVDYNGGAGVQHIALKTKDIITAIRHLRERGVEFLAVPSTYYKQLREKLKMAKIRVKENIDILEELKILVDYDEKGYLLQIFTKPMQDRPTLFLEVIQRHNHQGFGAGNFNSLFKAFEEEQDLRGNLTDMEPNGVVSGM</sequence>